<accession>Q2UJU5</accession>
<name>MPG1_ASPOR</name>
<feature type="chain" id="PRO_0000238484" description="Mannose-1-phosphate guanyltransferase">
    <location>
        <begin position="1"/>
        <end position="364"/>
    </location>
</feature>
<proteinExistence type="inferred from homology"/>
<dbReference type="EC" id="2.7.7.13"/>
<dbReference type="EMBL" id="BA000050">
    <property type="protein sequence ID" value="BAE58170.1"/>
    <property type="molecule type" value="Genomic_DNA"/>
</dbReference>
<dbReference type="SMR" id="Q2UJU5"/>
<dbReference type="STRING" id="510516.Q2UJU5"/>
<dbReference type="EnsemblFungi" id="BAE58170">
    <property type="protein sequence ID" value="BAE58170"/>
    <property type="gene ID" value="AO090003001069"/>
</dbReference>
<dbReference type="VEuPathDB" id="FungiDB:AO090003001069"/>
<dbReference type="HOGENOM" id="CLU_029499_0_0_1"/>
<dbReference type="OMA" id="GPNCWIC"/>
<dbReference type="UniPathway" id="UPA00126">
    <property type="reaction ID" value="UER00930"/>
</dbReference>
<dbReference type="Proteomes" id="UP000006564">
    <property type="component" value="Chromosome 2"/>
</dbReference>
<dbReference type="GO" id="GO:0005737">
    <property type="term" value="C:cytoplasm"/>
    <property type="evidence" value="ECO:0007669"/>
    <property type="project" value="UniProtKB-SubCell"/>
</dbReference>
<dbReference type="GO" id="GO:0005525">
    <property type="term" value="F:GTP binding"/>
    <property type="evidence" value="ECO:0007669"/>
    <property type="project" value="UniProtKB-KW"/>
</dbReference>
<dbReference type="GO" id="GO:0004475">
    <property type="term" value="F:mannose-1-phosphate guanylyltransferase (GTP) activity"/>
    <property type="evidence" value="ECO:0007669"/>
    <property type="project" value="UniProtKB-EC"/>
</dbReference>
<dbReference type="GO" id="GO:0000032">
    <property type="term" value="P:cell wall mannoprotein biosynthetic process"/>
    <property type="evidence" value="ECO:0007669"/>
    <property type="project" value="EnsemblFungi"/>
</dbReference>
<dbReference type="GO" id="GO:0009298">
    <property type="term" value="P:GDP-mannose biosynthetic process"/>
    <property type="evidence" value="ECO:0007669"/>
    <property type="project" value="UniProtKB-UniPathway"/>
</dbReference>
<dbReference type="GO" id="GO:0006486">
    <property type="term" value="P:protein glycosylation"/>
    <property type="evidence" value="ECO:0007669"/>
    <property type="project" value="EnsemblFungi"/>
</dbReference>
<dbReference type="CDD" id="cd05824">
    <property type="entry name" value="LbH_M1P_guanylylT_C"/>
    <property type="match status" value="1"/>
</dbReference>
<dbReference type="CDD" id="cd06425">
    <property type="entry name" value="M1P_guanylylT_B_like_N"/>
    <property type="match status" value="1"/>
</dbReference>
<dbReference type="FunFam" id="2.160.10.10:FF:000017">
    <property type="entry name" value="Mannose-1-phosphate guanyltransferase"/>
    <property type="match status" value="1"/>
</dbReference>
<dbReference type="FunFam" id="3.90.550.10:FF:000013">
    <property type="entry name" value="mannose-1-phosphate guanyltransferase beta"/>
    <property type="match status" value="1"/>
</dbReference>
<dbReference type="Gene3D" id="2.160.10.10">
    <property type="entry name" value="Hexapeptide repeat proteins"/>
    <property type="match status" value="1"/>
</dbReference>
<dbReference type="Gene3D" id="3.90.550.10">
    <property type="entry name" value="Spore Coat Polysaccharide Biosynthesis Protein SpsA, Chain A"/>
    <property type="match status" value="1"/>
</dbReference>
<dbReference type="InterPro" id="IPR056729">
    <property type="entry name" value="GMPPB_C"/>
</dbReference>
<dbReference type="InterPro" id="IPR045233">
    <property type="entry name" value="GMPPB_N"/>
</dbReference>
<dbReference type="InterPro" id="IPR018357">
    <property type="entry name" value="Hexapep_transf_CS"/>
</dbReference>
<dbReference type="InterPro" id="IPR050486">
    <property type="entry name" value="Mannose-1P_guanyltransferase"/>
</dbReference>
<dbReference type="InterPro" id="IPR005835">
    <property type="entry name" value="NTP_transferase_dom"/>
</dbReference>
<dbReference type="InterPro" id="IPR029044">
    <property type="entry name" value="Nucleotide-diphossugar_trans"/>
</dbReference>
<dbReference type="PANTHER" id="PTHR22572">
    <property type="entry name" value="SUGAR-1-PHOSPHATE GUANYL TRANSFERASE"/>
    <property type="match status" value="1"/>
</dbReference>
<dbReference type="Pfam" id="PF25087">
    <property type="entry name" value="GMPPB_C"/>
    <property type="match status" value="1"/>
</dbReference>
<dbReference type="Pfam" id="PF00483">
    <property type="entry name" value="NTP_transferase"/>
    <property type="match status" value="1"/>
</dbReference>
<dbReference type="SUPFAM" id="SSF53448">
    <property type="entry name" value="Nucleotide-diphospho-sugar transferases"/>
    <property type="match status" value="1"/>
</dbReference>
<dbReference type="PROSITE" id="PS00101">
    <property type="entry name" value="HEXAPEP_TRANSFERASES"/>
    <property type="match status" value="2"/>
</dbReference>
<evidence type="ECO:0000250" key="1"/>
<evidence type="ECO:0000305" key="2"/>
<reference key="1">
    <citation type="journal article" date="2005" name="Nature">
        <title>Genome sequencing and analysis of Aspergillus oryzae.</title>
        <authorList>
            <person name="Machida M."/>
            <person name="Asai K."/>
            <person name="Sano M."/>
            <person name="Tanaka T."/>
            <person name="Kumagai T."/>
            <person name="Terai G."/>
            <person name="Kusumoto K."/>
            <person name="Arima T."/>
            <person name="Akita O."/>
            <person name="Kashiwagi Y."/>
            <person name="Abe K."/>
            <person name="Gomi K."/>
            <person name="Horiuchi H."/>
            <person name="Kitamoto K."/>
            <person name="Kobayashi T."/>
            <person name="Takeuchi M."/>
            <person name="Denning D.W."/>
            <person name="Galagan J.E."/>
            <person name="Nierman W.C."/>
            <person name="Yu J."/>
            <person name="Archer D.B."/>
            <person name="Bennett J.W."/>
            <person name="Bhatnagar D."/>
            <person name="Cleveland T.E."/>
            <person name="Fedorova N.D."/>
            <person name="Gotoh O."/>
            <person name="Horikawa H."/>
            <person name="Hosoyama A."/>
            <person name="Ichinomiya M."/>
            <person name="Igarashi R."/>
            <person name="Iwashita K."/>
            <person name="Juvvadi P.R."/>
            <person name="Kato M."/>
            <person name="Kato Y."/>
            <person name="Kin T."/>
            <person name="Kokubun A."/>
            <person name="Maeda H."/>
            <person name="Maeyama N."/>
            <person name="Maruyama J."/>
            <person name="Nagasaki H."/>
            <person name="Nakajima T."/>
            <person name="Oda K."/>
            <person name="Okada K."/>
            <person name="Paulsen I."/>
            <person name="Sakamoto K."/>
            <person name="Sawano T."/>
            <person name="Takahashi M."/>
            <person name="Takase K."/>
            <person name="Terabayashi Y."/>
            <person name="Wortman J.R."/>
            <person name="Yamada O."/>
            <person name="Yamagata Y."/>
            <person name="Anazawa H."/>
            <person name="Hata Y."/>
            <person name="Koide Y."/>
            <person name="Komori T."/>
            <person name="Koyama Y."/>
            <person name="Minetoki T."/>
            <person name="Suharnan S."/>
            <person name="Tanaka A."/>
            <person name="Isono K."/>
            <person name="Kuhara S."/>
            <person name="Ogasawara N."/>
            <person name="Kikuchi H."/>
        </authorList>
    </citation>
    <scope>NUCLEOTIDE SEQUENCE [LARGE SCALE GENOMIC DNA]</scope>
    <source>
        <strain>ATCC 42149 / RIB 40</strain>
    </source>
</reference>
<keyword id="KW-0131">Cell cycle</keyword>
<keyword id="KW-0963">Cytoplasm</keyword>
<keyword id="KW-0342">GTP-binding</keyword>
<keyword id="KW-0547">Nucleotide-binding</keyword>
<keyword id="KW-0548">Nucleotidyltransferase</keyword>
<keyword id="KW-1185">Reference proteome</keyword>
<keyword id="KW-0808">Transferase</keyword>
<organism>
    <name type="scientific">Aspergillus oryzae (strain ATCC 42149 / RIB 40)</name>
    <name type="common">Yellow koji mold</name>
    <dbReference type="NCBI Taxonomy" id="510516"/>
    <lineage>
        <taxon>Eukaryota</taxon>
        <taxon>Fungi</taxon>
        <taxon>Dikarya</taxon>
        <taxon>Ascomycota</taxon>
        <taxon>Pezizomycotina</taxon>
        <taxon>Eurotiomycetes</taxon>
        <taxon>Eurotiomycetidae</taxon>
        <taxon>Eurotiales</taxon>
        <taxon>Aspergillaceae</taxon>
        <taxon>Aspergillus</taxon>
        <taxon>Aspergillus subgen. Circumdati</taxon>
    </lineage>
</organism>
<comment type="function">
    <text evidence="1">Involved in cell wall synthesis where it is required for glycosylation. Involved in cell cycle progression through cell-size checkpoint (By similarity).</text>
</comment>
<comment type="catalytic activity">
    <reaction>
        <text>alpha-D-mannose 1-phosphate + GTP + H(+) = GDP-alpha-D-mannose + diphosphate</text>
        <dbReference type="Rhea" id="RHEA:15229"/>
        <dbReference type="ChEBI" id="CHEBI:15378"/>
        <dbReference type="ChEBI" id="CHEBI:33019"/>
        <dbReference type="ChEBI" id="CHEBI:37565"/>
        <dbReference type="ChEBI" id="CHEBI:57527"/>
        <dbReference type="ChEBI" id="CHEBI:58409"/>
        <dbReference type="EC" id="2.7.7.13"/>
    </reaction>
</comment>
<comment type="pathway">
    <text>Nucleotide-sugar biosynthesis; GDP-alpha-D-mannose biosynthesis; GDP-alpha-D-mannose from alpha-D-mannose 1-phosphate (GTP route): step 1/1.</text>
</comment>
<comment type="subcellular location">
    <subcellularLocation>
        <location evidence="1">Cytoplasm</location>
    </subcellularLocation>
</comment>
<comment type="similarity">
    <text evidence="2">Belongs to the transferase hexapeptide repeat family.</text>
</comment>
<gene>
    <name type="primary">mpg1</name>
    <name type="ORF">AO090003001069</name>
</gene>
<protein>
    <recommendedName>
        <fullName>Mannose-1-phosphate guanyltransferase</fullName>
        <ecNumber>2.7.7.13</ecNumber>
    </recommendedName>
    <alternativeName>
        <fullName>GDP-mannose pyrophosphorylase</fullName>
    </alternativeName>
    <alternativeName>
        <fullName>GTP-mannose-1-phosphate guanylyltransferase</fullName>
    </alternativeName>
</protein>
<sequence length="364" mass="40130">MKALILVGGFGTRLRPLTLTLPKPLVEFGNRPMILHQVESLAAAGVTDIVLAVNYRPDVMVSALKKYEEQYNVKIEFSVESEPLGTAGPLKLAEKILGKDDSPFFVLNSDVICDYPFKELAEFHKKHGDEGTIVVTKVDEPSKYGVVVHKPNHPSRIDRFVEKPVEFVGNRINAGIYIMNPSVLNRIELRPTSIEQETFPAICKDGQLHSFDLEGFWMDVGQPKDFLSGTCLYLTSLAKRNSKLLAPNSEPYVYGGNVMVDPSAKIGKNCRIGPNVVIGPNVVVGDGVRLQRCVLLENSKVKDHAWVKSTIVGWNSSVGRWARLENVTVLGDDVTIADEVYVNGGSILPHKSIKQNVDVPAIIM</sequence>